<feature type="chain" id="PRO_0000130784" description="Large ribosomal subunit protein uL24">
    <location>
        <begin position="1"/>
        <end position="144"/>
    </location>
</feature>
<feature type="region of interest" description="Disordered" evidence="2">
    <location>
        <begin position="102"/>
        <end position="144"/>
    </location>
</feature>
<feature type="compositionally biased region" description="Basic and acidic residues" evidence="2">
    <location>
        <begin position="103"/>
        <end position="134"/>
    </location>
</feature>
<feature type="compositionally biased region" description="Acidic residues" evidence="2">
    <location>
        <begin position="135"/>
        <end position="144"/>
    </location>
</feature>
<protein>
    <recommendedName>
        <fullName evidence="3">Large ribosomal subunit protein uL24</fullName>
    </recommendedName>
    <alternativeName>
        <fullName>50S ribosomal protein L24</fullName>
    </alternativeName>
</protein>
<comment type="function">
    <text evidence="1">One of two assembly initiator proteins, it binds directly to the 5'-end of the 23S rRNA, where it nucleates assembly of the 50S subunit.</text>
</comment>
<comment type="function">
    <text evidence="1">Located at the polypeptide exit tunnel on the outside of the subunit.</text>
</comment>
<comment type="subunit">
    <text evidence="1">Part of the 50S ribosomal subunit.</text>
</comment>
<comment type="similarity">
    <text evidence="3">Belongs to the universal ribosomal protein uL24 family.</text>
</comment>
<gene>
    <name type="primary">rpl24</name>
    <name type="ordered locus">Ta1260.1</name>
</gene>
<proteinExistence type="inferred from homology"/>
<evidence type="ECO:0000250" key="1"/>
<evidence type="ECO:0000256" key="2">
    <source>
        <dbReference type="SAM" id="MobiDB-lite"/>
    </source>
</evidence>
<evidence type="ECO:0000305" key="3"/>
<dbReference type="EMBL" id="AL445067">
    <property type="status" value="NOT_ANNOTATED_CDS"/>
    <property type="molecule type" value="Genomic_DNA"/>
</dbReference>
<dbReference type="RefSeq" id="WP_010901667.1">
    <property type="nucleotide sequence ID" value="NC_002578.1"/>
</dbReference>
<dbReference type="SMR" id="P60746"/>
<dbReference type="FunCoup" id="P60746">
    <property type="interactions" value="189"/>
</dbReference>
<dbReference type="PaxDb" id="273075-Ta1259a"/>
<dbReference type="eggNOG" id="arCOG04094">
    <property type="taxonomic scope" value="Archaea"/>
</dbReference>
<dbReference type="InParanoid" id="P60746"/>
<dbReference type="OrthoDB" id="10899at2157"/>
<dbReference type="Proteomes" id="UP000001024">
    <property type="component" value="Chromosome"/>
</dbReference>
<dbReference type="GO" id="GO:0015934">
    <property type="term" value="C:large ribosomal subunit"/>
    <property type="evidence" value="ECO:0007669"/>
    <property type="project" value="InterPro"/>
</dbReference>
<dbReference type="GO" id="GO:0019843">
    <property type="term" value="F:rRNA binding"/>
    <property type="evidence" value="ECO:0007669"/>
    <property type="project" value="UniProtKB-KW"/>
</dbReference>
<dbReference type="GO" id="GO:0003735">
    <property type="term" value="F:structural constituent of ribosome"/>
    <property type="evidence" value="ECO:0007669"/>
    <property type="project" value="InterPro"/>
</dbReference>
<dbReference type="GO" id="GO:0006412">
    <property type="term" value="P:translation"/>
    <property type="evidence" value="ECO:0007669"/>
    <property type="project" value="InterPro"/>
</dbReference>
<dbReference type="CDD" id="cd06089">
    <property type="entry name" value="KOW_RPL26"/>
    <property type="match status" value="1"/>
</dbReference>
<dbReference type="Gene3D" id="2.30.30.30">
    <property type="match status" value="1"/>
</dbReference>
<dbReference type="InterPro" id="IPR005824">
    <property type="entry name" value="KOW"/>
</dbReference>
<dbReference type="InterPro" id="IPR014722">
    <property type="entry name" value="Rib_uL2_dom2"/>
</dbReference>
<dbReference type="InterPro" id="IPR005825">
    <property type="entry name" value="Ribosomal_uL24_CS"/>
</dbReference>
<dbReference type="InterPro" id="IPR005756">
    <property type="entry name" value="Ribosomal_uL24_euk/arc"/>
</dbReference>
<dbReference type="InterPro" id="IPR041988">
    <property type="entry name" value="Ribosomal_uL24_KOW"/>
</dbReference>
<dbReference type="InterPro" id="IPR008991">
    <property type="entry name" value="Translation_prot_SH3-like_sf"/>
</dbReference>
<dbReference type="NCBIfam" id="TIGR01080">
    <property type="entry name" value="rplX_A_E"/>
    <property type="match status" value="1"/>
</dbReference>
<dbReference type="PANTHER" id="PTHR11143">
    <property type="entry name" value="60S RIBOSOMAL PROTEIN L26 FAMILY MEMBER"/>
    <property type="match status" value="1"/>
</dbReference>
<dbReference type="Pfam" id="PF16906">
    <property type="entry name" value="Ribosomal_L26"/>
    <property type="match status" value="1"/>
</dbReference>
<dbReference type="SMART" id="SM00739">
    <property type="entry name" value="KOW"/>
    <property type="match status" value="1"/>
</dbReference>
<dbReference type="SUPFAM" id="SSF50104">
    <property type="entry name" value="Translation proteins SH3-like domain"/>
    <property type="match status" value="1"/>
</dbReference>
<dbReference type="PROSITE" id="PS01108">
    <property type="entry name" value="RIBOSOMAL_L24"/>
    <property type="match status" value="1"/>
</dbReference>
<keyword id="KW-1185">Reference proteome</keyword>
<keyword id="KW-0687">Ribonucleoprotein</keyword>
<keyword id="KW-0689">Ribosomal protein</keyword>
<keyword id="KW-0694">RNA-binding</keyword>
<keyword id="KW-0699">rRNA-binding</keyword>
<reference key="1">
    <citation type="journal article" date="2000" name="Nature">
        <title>The genome sequence of the thermoacidophilic scavenger Thermoplasma acidophilum.</title>
        <authorList>
            <person name="Ruepp A."/>
            <person name="Graml W."/>
            <person name="Santos-Martinez M.-L."/>
            <person name="Koretke K.K."/>
            <person name="Volker C."/>
            <person name="Mewes H.-W."/>
            <person name="Frishman D."/>
            <person name="Stocker S."/>
            <person name="Lupas A.N."/>
            <person name="Baumeister W."/>
        </authorList>
    </citation>
    <scope>NUCLEOTIDE SEQUENCE [LARGE SCALE GENOMIC DNA]</scope>
    <source>
        <strain>ATCC 25905 / DSM 1728 / JCM 9062 / NBRC 15155 / AMRC-C165</strain>
    </source>
</reference>
<organism>
    <name type="scientific">Thermoplasma acidophilum (strain ATCC 25905 / DSM 1728 / JCM 9062 / NBRC 15155 / AMRC-C165)</name>
    <dbReference type="NCBI Taxonomy" id="273075"/>
    <lineage>
        <taxon>Archaea</taxon>
        <taxon>Methanobacteriati</taxon>
        <taxon>Thermoplasmatota</taxon>
        <taxon>Thermoplasmata</taxon>
        <taxon>Thermoplasmatales</taxon>
        <taxon>Thermoplasmataceae</taxon>
        <taxon>Thermoplasma</taxon>
    </lineage>
</organism>
<name>RL24_THEAC</name>
<accession>P60746</accession>
<sequence>MYRKMEVSLSKDLRKKYGIRSFPVIMGDVVKVISGSRKGEGGKVAEVDHASGLVVVEGITIARADGKQKGFGIQPEKLQITHLDLSRGDRFDKIKSLAARKNIVVEKPEPEPEPRKEETAEAQEAKEEAVAEEKTEVDDNDKQN</sequence>